<reference key="1">
    <citation type="journal article" date="2006" name="Nat. Cell Biol.">
        <title>The Legionella pneumophila effector protein DrrA is a Rab1 guanine nucleotide-exchange factor.</title>
        <authorList>
            <person name="Murata T."/>
            <person name="Delprato A."/>
            <person name="Ingmundson A."/>
            <person name="Toomre D.K."/>
            <person name="Lambright D.G."/>
            <person name="Roy C.R."/>
        </authorList>
    </citation>
    <scope>NUCLEOTIDE SEQUENCE [GENOMIC DNA]</scope>
    <scope>FUNCTION AS A GUANINE NUCLEOTIDE EXCHANGE FACTOR</scope>
    <scope>SUBCELLULAR LOCATION</scope>
    <source>
        <strain>130b / Wadsworth / Serogroup 1</strain>
    </source>
</reference>
<reference key="2">
    <citation type="journal article" date="2007" name="Nature">
        <title>Legionella pneumophila proteins that regulate Rab1 membrane cycling.</title>
        <authorList>
            <person name="Ingmundson A."/>
            <person name="Delprato A."/>
            <person name="Lambright D.G."/>
            <person name="Roy C.R."/>
        </authorList>
    </citation>
    <scope>FUNCTION</scope>
</reference>
<reference key="3">
    <citation type="journal article" date="2009" name="J. Biol. Chem.">
        <title>Rab1 guanine nucleotide exchange factor SidM is a major phosphatidylinositol 4-phosphate-binding effector protein of Legionella pneumophila.</title>
        <authorList>
            <person name="Brombacher E."/>
            <person name="Urwyler S."/>
            <person name="Ragaz C."/>
            <person name="Weber S.S."/>
            <person name="Kami K."/>
            <person name="Overduin M."/>
            <person name="Hilbi H."/>
        </authorList>
    </citation>
    <scope>PTDINS(4)P-BINDING</scope>
    <scope>DOMAIN P4M</scope>
    <scope>SUBCELLULAR LOCATION</scope>
    <source>
        <strain>JR32</strain>
    </source>
</reference>
<reference key="4">
    <citation type="journal article" date="2010" name="Science">
        <title>The Legionella effector protein DrrA AMPylates the membrane traffic regulator Rab1b.</title>
        <authorList>
            <person name="Muller M.P."/>
            <person name="Peters H."/>
            <person name="Blumer J."/>
            <person name="Blankenfeldt W."/>
            <person name="Goody R.S."/>
            <person name="Itzen A."/>
        </authorList>
    </citation>
    <scope>X-RAY CRYSTALLOGRAPHY (2.10 ANGSTROMS) OF 9-218 IN COMPLEX WITH HOST RAB1B</scope>
    <scope>FUNCTION AS A PROTEIN ADENYLYLTRANSFERASE/GUANYLYLTRANSFERASE</scope>
    <scope>CATALYTIC ACTIVITY</scope>
    <scope>MUTAGENESIS OF 110-ASP--ASP-112</scope>
</reference>
<comment type="function">
    <text evidence="1 2 4">Virulence effector that plays a key role in hijacking the host vesicular trafficking by recruiting the small guanosine triphosphatase (GTPase) Rab1 to the cytosolic face of the Legionella-containing vacuole (LCVs). Acts as a GDP-GTP exchange factor (GEF) for the small GTPase Rab1 (RAB1A, RAB1B or RAB1C), thereby converting Rab1 to an active GTP-bound state, leading to the incorporation of Rab1 into LCVs. Also shows RabGDI displacement factor (GDF) activity; however, this probably represents a passive activity following the GEF activity. Also acts as an adenylyltransferase by mediating the addition of adenosine 5'-monophosphate (AMP) to 'Tyr-77' of host RAB1B, thereby rendering RAB1B constitutively active. Also has adenylyltransferase activity towards Rab6 and Rab35. Also displays guanylyltransferase activity by mediating the addition of guanosine 5'-monophosphate (GMP) to host RAB1B in vitro; however such activity remains uncertain in vivo. Specifically binds phosphatidylinositol 4-phosphate (PtdIns(4)P) lipids on the cytosolic surface of the phagosomal membrane shortly after infection.</text>
</comment>
<comment type="catalytic activity">
    <reaction evidence="4">
        <text>L-tyrosyl-[protein] + ATP = O-(5'-adenylyl)-L-tyrosyl-[protein] + diphosphate</text>
        <dbReference type="Rhea" id="RHEA:54288"/>
        <dbReference type="Rhea" id="RHEA-COMP:10136"/>
        <dbReference type="Rhea" id="RHEA-COMP:13846"/>
        <dbReference type="ChEBI" id="CHEBI:30616"/>
        <dbReference type="ChEBI" id="CHEBI:33019"/>
        <dbReference type="ChEBI" id="CHEBI:46858"/>
        <dbReference type="ChEBI" id="CHEBI:83624"/>
        <dbReference type="EC" id="2.7.7.108"/>
    </reaction>
</comment>
<comment type="catalytic activity">
    <reaction evidence="4">
        <text>L-threonyl-[protein] + ATP = 3-O-(5'-adenylyl)-L-threonyl-[protein] + diphosphate</text>
        <dbReference type="Rhea" id="RHEA:54292"/>
        <dbReference type="Rhea" id="RHEA-COMP:11060"/>
        <dbReference type="Rhea" id="RHEA-COMP:13847"/>
        <dbReference type="ChEBI" id="CHEBI:30013"/>
        <dbReference type="ChEBI" id="CHEBI:30616"/>
        <dbReference type="ChEBI" id="CHEBI:33019"/>
        <dbReference type="ChEBI" id="CHEBI:138113"/>
        <dbReference type="EC" id="2.7.7.108"/>
    </reaction>
</comment>
<comment type="catalytic activity">
    <reaction evidence="4">
        <text>L-tyrosyl-[protein] + GTP = O-(5'-guanylyl)-L-tyrosyl-[protein] + diphosphate</text>
        <dbReference type="Rhea" id="RHEA:54296"/>
        <dbReference type="Rhea" id="RHEA-COMP:10136"/>
        <dbReference type="Rhea" id="RHEA-COMP:13848"/>
        <dbReference type="ChEBI" id="CHEBI:33019"/>
        <dbReference type="ChEBI" id="CHEBI:37565"/>
        <dbReference type="ChEBI" id="CHEBI:46858"/>
        <dbReference type="ChEBI" id="CHEBI:138114"/>
        <dbReference type="EC" id="2.7.7.n6"/>
    </reaction>
</comment>
<comment type="interaction">
    <interactant intactId="EBI-15838677">
        <id>Q29ST3</id>
    </interactant>
    <interactant intactId="EBI-716845">
        <id>P62820</id>
        <label>RAB1A</label>
    </interactant>
    <organismsDiffer>true</organismsDiffer>
    <experiments>2</experiments>
</comment>
<comment type="interaction">
    <interactant intactId="EBI-15838677">
        <id>Q29ST3</id>
    </interactant>
    <interactant intactId="EBI-15666813">
        <id>P62820-1</id>
        <label>RAB1A</label>
    </interactant>
    <organismsDiffer>true</organismsDiffer>
    <experiments>3</experiments>
</comment>
<comment type="subcellular location">
    <subcellularLocation>
        <location evidence="3">Secreted</location>
    </subcellularLocation>
    <subcellularLocation>
        <location evidence="1">Host cytoplasmic vesicle membrane</location>
        <topology evidence="6">Peripheral membrane protein</topology>
    </subcellularLocation>
    <text evidence="3">Translocated into the host cell via the type IV secretion system (T4SS). Membrane association is mediated by PtdIns(4)P-binding.</text>
</comment>
<comment type="domain">
    <text evidence="3">The P4M (PtdIns(4)P-binding) region mediates binding to PtdIns(4)P and membrane attachment.</text>
</comment>
<comment type="similarity">
    <text evidence="5">Belongs to the DrrA family.</text>
</comment>
<feature type="chain" id="PRO_0000417544" description="Multifunctional virulence effector protein DrrA">
    <location>
        <begin position="1"/>
        <end position="647"/>
    </location>
</feature>
<feature type="region of interest" description="Protein adenylyltransferase/guanylyltransferase">
    <location>
        <begin position="1"/>
        <end position="339"/>
    </location>
</feature>
<feature type="region of interest" description="Rab1 guanine nucleotide exchange factor">
    <location>
        <begin position="340"/>
        <end position="520"/>
    </location>
</feature>
<feature type="region of interest" description="P4M region">
    <location>
        <begin position="544"/>
        <end position="647"/>
    </location>
</feature>
<feature type="mutagenesis site" description="Abolishes protein adenylyltransferase activity." evidence="4">
    <original>DLD</original>
    <variation>ALA</variation>
    <location>
        <begin position="110"/>
        <end position="112"/>
    </location>
</feature>
<feature type="turn" evidence="7">
    <location>
        <begin position="23"/>
        <end position="25"/>
    </location>
</feature>
<feature type="strand" evidence="9">
    <location>
        <begin position="27"/>
        <end position="29"/>
    </location>
</feature>
<feature type="helix" evidence="7">
    <location>
        <begin position="31"/>
        <end position="53"/>
    </location>
</feature>
<feature type="helix" evidence="7">
    <location>
        <begin position="55"/>
        <end position="57"/>
    </location>
</feature>
<feature type="helix" evidence="7">
    <location>
        <begin position="61"/>
        <end position="84"/>
    </location>
</feature>
<feature type="strand" evidence="7">
    <location>
        <begin position="93"/>
        <end position="97"/>
    </location>
</feature>
<feature type="helix" evidence="7">
    <location>
        <begin position="100"/>
        <end position="102"/>
    </location>
</feature>
<feature type="helix" evidence="7">
    <location>
        <begin position="104"/>
        <end position="106"/>
    </location>
</feature>
<feature type="strand" evidence="7">
    <location>
        <begin position="112"/>
        <end position="116"/>
    </location>
</feature>
<feature type="helix" evidence="7">
    <location>
        <begin position="121"/>
        <end position="143"/>
    </location>
</feature>
<feature type="strand" evidence="7">
    <location>
        <begin position="157"/>
        <end position="161"/>
    </location>
</feature>
<feature type="helix" evidence="7">
    <location>
        <begin position="163"/>
        <end position="171"/>
    </location>
</feature>
<feature type="strand" evidence="7">
    <location>
        <begin position="175"/>
        <end position="177"/>
    </location>
</feature>
<feature type="helix" evidence="7">
    <location>
        <begin position="178"/>
        <end position="186"/>
    </location>
</feature>
<feature type="strand" evidence="7">
    <location>
        <begin position="189"/>
        <end position="193"/>
    </location>
</feature>
<feature type="helix" evidence="7">
    <location>
        <begin position="196"/>
        <end position="207"/>
    </location>
</feature>
<feature type="helix" evidence="7">
    <location>
        <begin position="211"/>
        <end position="214"/>
    </location>
</feature>
<feature type="helix" evidence="9">
    <location>
        <begin position="217"/>
        <end position="225"/>
    </location>
</feature>
<feature type="strand" evidence="9">
    <location>
        <begin position="236"/>
        <end position="239"/>
    </location>
</feature>
<feature type="turn" evidence="9">
    <location>
        <begin position="240"/>
        <end position="244"/>
    </location>
</feature>
<feature type="helix" evidence="9">
    <location>
        <begin position="245"/>
        <end position="258"/>
    </location>
</feature>
<feature type="helix" evidence="9">
    <location>
        <begin position="267"/>
        <end position="269"/>
    </location>
</feature>
<feature type="helix" evidence="9">
    <location>
        <begin position="271"/>
        <end position="280"/>
    </location>
</feature>
<feature type="helix" evidence="9">
    <location>
        <begin position="286"/>
        <end position="310"/>
    </location>
</feature>
<feature type="strand" evidence="9">
    <location>
        <begin position="316"/>
        <end position="318"/>
    </location>
</feature>
<feature type="helix" evidence="9">
    <location>
        <begin position="319"/>
        <end position="348"/>
    </location>
</feature>
<feature type="helix" evidence="8">
    <location>
        <begin position="365"/>
        <end position="382"/>
    </location>
</feature>
<feature type="helix" evidence="8">
    <location>
        <begin position="386"/>
        <end position="389"/>
    </location>
</feature>
<feature type="helix" evidence="8">
    <location>
        <begin position="390"/>
        <end position="393"/>
    </location>
</feature>
<feature type="helix" evidence="8">
    <location>
        <begin position="400"/>
        <end position="419"/>
    </location>
</feature>
<feature type="helix" evidence="8">
    <location>
        <begin position="428"/>
        <end position="447"/>
    </location>
</feature>
<feature type="helix" evidence="8">
    <location>
        <begin position="458"/>
        <end position="460"/>
    </location>
</feature>
<feature type="helix" evidence="8">
    <location>
        <begin position="464"/>
        <end position="478"/>
    </location>
</feature>
<feature type="helix" evidence="8">
    <location>
        <begin position="490"/>
        <end position="506"/>
    </location>
</feature>
<feature type="helix" evidence="8">
    <location>
        <begin position="512"/>
        <end position="520"/>
    </location>
</feature>
<feature type="strand" evidence="8">
    <location>
        <begin position="526"/>
        <end position="528"/>
    </location>
</feature>
<name>DRRA_LEGPN</name>
<organism>
    <name type="scientific">Legionella pneumophila</name>
    <dbReference type="NCBI Taxonomy" id="446"/>
    <lineage>
        <taxon>Bacteria</taxon>
        <taxon>Pseudomonadati</taxon>
        <taxon>Pseudomonadota</taxon>
        <taxon>Gammaproteobacteria</taxon>
        <taxon>Legionellales</taxon>
        <taxon>Legionellaceae</taxon>
        <taxon>Legionella</taxon>
    </lineage>
</organism>
<dbReference type="EC" id="2.7.7.108" evidence="4"/>
<dbReference type="EC" id="2.7.7.n6" evidence="4"/>
<dbReference type="EMBL" id="AY945933">
    <property type="protein sequence ID" value="AAY23285.1"/>
    <property type="molecule type" value="Genomic_DNA"/>
</dbReference>
<dbReference type="RefSeq" id="WP_010948166.1">
    <property type="nucleotide sequence ID" value="NZ_UGOV01000002.1"/>
</dbReference>
<dbReference type="PDB" id="3NKU">
    <property type="method" value="X-ray"/>
    <property type="resolution" value="2.10 A"/>
    <property type="chains" value="A/B=9-218"/>
</dbReference>
<dbReference type="PDB" id="5O74">
    <property type="method" value="X-ray"/>
    <property type="resolution" value="2.50 A"/>
    <property type="chains" value="A/C/E/G/I/K=340-533"/>
</dbReference>
<dbReference type="PDB" id="6YX5">
    <property type="method" value="X-ray"/>
    <property type="resolution" value="2.14 A"/>
    <property type="chains" value="B=16-352"/>
</dbReference>
<dbReference type="PDBsum" id="3NKU"/>
<dbReference type="PDBsum" id="5O74"/>
<dbReference type="PDBsum" id="6YX5"/>
<dbReference type="SMR" id="Q29ST3"/>
<dbReference type="DIP" id="DIP-58604N"/>
<dbReference type="IntAct" id="Q29ST3">
    <property type="interactions" value="2"/>
</dbReference>
<dbReference type="MINT" id="Q29ST3"/>
<dbReference type="GeneID" id="57036458"/>
<dbReference type="EvolutionaryTrace" id="Q29ST3"/>
<dbReference type="GO" id="GO:0005576">
    <property type="term" value="C:extracellular region"/>
    <property type="evidence" value="ECO:0007669"/>
    <property type="project" value="UniProtKB-SubCell"/>
</dbReference>
<dbReference type="GO" id="GO:0044161">
    <property type="term" value="C:host cell cytoplasmic vesicle"/>
    <property type="evidence" value="ECO:0000314"/>
    <property type="project" value="UniProtKB"/>
</dbReference>
<dbReference type="GO" id="GO:0044162">
    <property type="term" value="C:host cell cytoplasmic vesicle membrane"/>
    <property type="evidence" value="ECO:0007669"/>
    <property type="project" value="UniProtKB-SubCell"/>
</dbReference>
<dbReference type="GO" id="GO:0016020">
    <property type="term" value="C:membrane"/>
    <property type="evidence" value="ECO:0007669"/>
    <property type="project" value="UniProtKB-KW"/>
</dbReference>
<dbReference type="GO" id="GO:0070733">
    <property type="term" value="F:AMPylase activity"/>
    <property type="evidence" value="ECO:0000314"/>
    <property type="project" value="UniProtKB"/>
</dbReference>
<dbReference type="GO" id="GO:0005524">
    <property type="term" value="F:ATP binding"/>
    <property type="evidence" value="ECO:0007669"/>
    <property type="project" value="UniProtKB-KW"/>
</dbReference>
<dbReference type="GO" id="GO:0005085">
    <property type="term" value="F:guanyl-nucleotide exchange factor activity"/>
    <property type="evidence" value="ECO:0000314"/>
    <property type="project" value="UniProtKB"/>
</dbReference>
<dbReference type="GO" id="GO:0070273">
    <property type="term" value="F:phosphatidylinositol-4-phosphate binding"/>
    <property type="evidence" value="ECO:0000314"/>
    <property type="project" value="UniProtKB"/>
</dbReference>
<dbReference type="GO" id="GO:0044600">
    <property type="term" value="F:protein guanylyltransferase activity"/>
    <property type="evidence" value="ECO:0000314"/>
    <property type="project" value="UniProtKB"/>
</dbReference>
<dbReference type="GO" id="GO:0031267">
    <property type="term" value="F:small GTPase binding"/>
    <property type="evidence" value="ECO:0000314"/>
    <property type="project" value="UniProtKB"/>
</dbReference>
<dbReference type="GO" id="GO:0018117">
    <property type="term" value="P:protein adenylylation"/>
    <property type="evidence" value="ECO:0000314"/>
    <property type="project" value="UniProtKB"/>
</dbReference>
<dbReference type="GO" id="GO:0018260">
    <property type="term" value="P:protein guanylylation"/>
    <property type="evidence" value="ECO:0000314"/>
    <property type="project" value="UniProtKB"/>
</dbReference>
<dbReference type="GO" id="GO:0043087">
    <property type="term" value="P:regulation of GTPase activity"/>
    <property type="evidence" value="ECO:0000314"/>
    <property type="project" value="UniProtKB"/>
</dbReference>
<dbReference type="CDD" id="cd11689">
    <property type="entry name" value="SidM_DrrA_GEF"/>
    <property type="match status" value="1"/>
</dbReference>
<dbReference type="Gene3D" id="1.10.357.170">
    <property type="match status" value="1"/>
</dbReference>
<dbReference type="Gene3D" id="1.20.120.1520">
    <property type="match status" value="1"/>
</dbReference>
<dbReference type="Gene3D" id="1.20.1280.280">
    <property type="match status" value="1"/>
</dbReference>
<dbReference type="Gene3D" id="1.20.1440.370">
    <property type="match status" value="2"/>
</dbReference>
<dbReference type="InterPro" id="IPR033784">
    <property type="entry name" value="DrrA_GEF_Leg_pneum"/>
</dbReference>
<dbReference type="InterPro" id="IPR028057">
    <property type="entry name" value="DrrA_P4M"/>
</dbReference>
<dbReference type="InterPro" id="IPR038346">
    <property type="entry name" value="DrrA_PI4P-bd_sf"/>
</dbReference>
<dbReference type="InterPro" id="IPR048717">
    <property type="entry name" value="SidM_N"/>
</dbReference>
<dbReference type="InterPro" id="IPR048718">
    <property type="entry name" value="SidM_Rab1_act"/>
</dbReference>
<dbReference type="Pfam" id="PF14860">
    <property type="entry name" value="DrrA_P4M"/>
    <property type="match status" value="1"/>
</dbReference>
<dbReference type="Pfam" id="PF20879">
    <property type="entry name" value="SidM_N"/>
    <property type="match status" value="1"/>
</dbReference>
<dbReference type="Pfam" id="PF20851">
    <property type="entry name" value="SidM_Rab1-act"/>
    <property type="match status" value="1"/>
</dbReference>
<gene>
    <name type="primary">drrA</name>
    <name type="synonym">sidM</name>
</gene>
<accession>Q29ST3</accession>
<proteinExistence type="evidence at protein level"/>
<sequence>MSIMGRIKMSVNEEQFGSLYSDERDKPLLSPTAQKKFEEYQNKLANLSKIIRENEGNEVSPWQEWENGLRQIYKEMIYDAFDALGVEMPKDMEVHFAGSLAKAQATEYSDLDAFVIVKNDEDIKKVKPVFDALNNLCQRIFTASNQIYPDPIGINPSRLIGTPDDLFGMLKDGMVADVEATAMSILTSKPVLPRYELGEELRDKIKQEPSFSNMVSAKKFYNKAIKDFTAPKEGAEVVSVKTHIMRPIDFMLMGLREEFNLYSEDGAHLSAPGTIRLLREKNLLPEEQIARIESVYNQAMSKRFELHAEHKKEHDEMPYSDAKAMLDEVAKIRELGVQRVTRIENLENAKKLWDNANSMLEKGNISGYLKAANELHKFMKEKNLKEDDLRPELSDKTISPKGYAILQSLWGAASDYSRAAATLTESTVEPGLVSAVNKMSAFFMDCKLSPNERATPDPDFKVGKSKILVGIMQFIKDVADPTSKIWMHNTKALMNHKIAAIQKLERSNNVNDETLESVLSSKGENLSEYLSYKYATKDEGREHRYTASTENFKNVKEKYQQMRGDALKTEILADFKDKLAEATDEQSLKQIVAELKSKDEYRILAKGQGLTTQLLGLKTSSVSSFEKMVEETRESIKSQERQTIKIK</sequence>
<protein>
    <recommendedName>
        <fullName>Multifunctional virulence effector protein DrrA</fullName>
    </recommendedName>
    <alternativeName>
        <fullName>Defects in Rab1 recruitment protein A</fullName>
    </alternativeName>
    <domain>
        <recommendedName>
            <fullName>Protein adenylyltransferase</fullName>
            <shortName>AMPylator</shortName>
            <ecNumber evidence="4">2.7.7.108</ecNumber>
        </recommendedName>
        <alternativeName>
            <fullName>Protein guanylyltransferase</fullName>
            <shortName>GMPylator</shortName>
            <ecNumber evidence="4">2.7.7.n6</ecNumber>
        </alternativeName>
    </domain>
    <domain>
        <recommendedName>
            <fullName>Rab1 guanine nucleotide exchange factor</fullName>
        </recommendedName>
    </domain>
</protein>
<keyword id="KW-0002">3D-structure</keyword>
<keyword id="KW-0067">ATP-binding</keyword>
<keyword id="KW-0344">Guanine-nucleotide releasing factor</keyword>
<keyword id="KW-1036">Host cytoplasmic vesicle</keyword>
<keyword id="KW-1043">Host membrane</keyword>
<keyword id="KW-0446">Lipid-binding</keyword>
<keyword id="KW-0472">Membrane</keyword>
<keyword id="KW-0511">Multifunctional enzyme</keyword>
<keyword id="KW-0547">Nucleotide-binding</keyword>
<keyword id="KW-0548">Nucleotidyltransferase</keyword>
<keyword id="KW-0964">Secreted</keyword>
<keyword id="KW-0808">Transferase</keyword>
<keyword id="KW-0843">Virulence</keyword>
<evidence type="ECO:0000269" key="1">
    <source>
    </source>
</evidence>
<evidence type="ECO:0000269" key="2">
    <source>
    </source>
</evidence>
<evidence type="ECO:0000269" key="3">
    <source>
    </source>
</evidence>
<evidence type="ECO:0000269" key="4">
    <source>
    </source>
</evidence>
<evidence type="ECO:0000305" key="5"/>
<evidence type="ECO:0000305" key="6">
    <source>
    </source>
</evidence>
<evidence type="ECO:0007829" key="7">
    <source>
        <dbReference type="PDB" id="3NKU"/>
    </source>
</evidence>
<evidence type="ECO:0007829" key="8">
    <source>
        <dbReference type="PDB" id="5O74"/>
    </source>
</evidence>
<evidence type="ECO:0007829" key="9">
    <source>
        <dbReference type="PDB" id="6YX5"/>
    </source>
</evidence>